<evidence type="ECO:0000255" key="1">
    <source>
        <dbReference type="HAMAP-Rule" id="MF_00270"/>
    </source>
</evidence>
<evidence type="ECO:0000305" key="2"/>
<organism>
    <name type="scientific">Leptospira biflexa serovar Patoc (strain Patoc 1 / Ames)</name>
    <dbReference type="NCBI Taxonomy" id="355278"/>
    <lineage>
        <taxon>Bacteria</taxon>
        <taxon>Pseudomonadati</taxon>
        <taxon>Spirochaetota</taxon>
        <taxon>Spirochaetia</taxon>
        <taxon>Leptospirales</taxon>
        <taxon>Leptospiraceae</taxon>
        <taxon>Leptospira</taxon>
    </lineage>
</organism>
<keyword id="KW-0687">Ribonucleoprotein</keyword>
<keyword id="KW-0689">Ribosomal protein</keyword>
<keyword id="KW-0694">RNA-binding</keyword>
<keyword id="KW-0699">rRNA-binding</keyword>
<proteinExistence type="inferred from homology"/>
<comment type="function">
    <text evidence="1">Binds as a heterodimer with protein bS6 to the central domain of the 16S rRNA, where it helps stabilize the platform of the 30S subunit.</text>
</comment>
<comment type="subunit">
    <text evidence="1">Part of the 30S ribosomal subunit. Forms a tight heterodimer with protein bS6.</text>
</comment>
<comment type="similarity">
    <text evidence="1">Belongs to the bacterial ribosomal protein bS18 family.</text>
</comment>
<accession>B0SB38</accession>
<sequence>MEDDEKGGFRGKDGEGKFGRKNAKYKKKVCKFCADKALLAGLDYKRVDILERFVTNRGKIIPRRITGTCGKHQRALAREIRKSRSIGLLPFKVL</sequence>
<reference key="1">
    <citation type="journal article" date="2008" name="PLoS ONE">
        <title>Genome sequence of the saprophyte Leptospira biflexa provides insights into the evolution of Leptospira and the pathogenesis of leptospirosis.</title>
        <authorList>
            <person name="Picardeau M."/>
            <person name="Bulach D.M."/>
            <person name="Bouchier C."/>
            <person name="Zuerner R.L."/>
            <person name="Zidane N."/>
            <person name="Wilson P.J."/>
            <person name="Creno S."/>
            <person name="Kuczek E.S."/>
            <person name="Bommezzadri S."/>
            <person name="Davis J.C."/>
            <person name="McGrath A."/>
            <person name="Johnson M.J."/>
            <person name="Boursaux-Eude C."/>
            <person name="Seemann T."/>
            <person name="Rouy Z."/>
            <person name="Coppel R.L."/>
            <person name="Rood J.I."/>
            <person name="Lajus A."/>
            <person name="Davies J.K."/>
            <person name="Medigue C."/>
            <person name="Adler B."/>
        </authorList>
    </citation>
    <scope>NUCLEOTIDE SEQUENCE [LARGE SCALE GENOMIC DNA]</scope>
    <source>
        <strain>Patoc 1 / Ames</strain>
    </source>
</reference>
<dbReference type="EMBL" id="CP000777">
    <property type="protein sequence ID" value="ABZ94544.1"/>
    <property type="molecule type" value="Genomic_DNA"/>
</dbReference>
<dbReference type="SMR" id="B0SB38"/>
<dbReference type="KEGG" id="lbf:LBF_2044"/>
<dbReference type="HOGENOM" id="CLU_148710_0_3_12"/>
<dbReference type="GO" id="GO:0022627">
    <property type="term" value="C:cytosolic small ribosomal subunit"/>
    <property type="evidence" value="ECO:0007669"/>
    <property type="project" value="TreeGrafter"/>
</dbReference>
<dbReference type="GO" id="GO:0070181">
    <property type="term" value="F:small ribosomal subunit rRNA binding"/>
    <property type="evidence" value="ECO:0007669"/>
    <property type="project" value="TreeGrafter"/>
</dbReference>
<dbReference type="GO" id="GO:0003735">
    <property type="term" value="F:structural constituent of ribosome"/>
    <property type="evidence" value="ECO:0007669"/>
    <property type="project" value="InterPro"/>
</dbReference>
<dbReference type="GO" id="GO:0006412">
    <property type="term" value="P:translation"/>
    <property type="evidence" value="ECO:0007669"/>
    <property type="project" value="UniProtKB-UniRule"/>
</dbReference>
<dbReference type="Gene3D" id="4.10.640.10">
    <property type="entry name" value="Ribosomal protein S18"/>
    <property type="match status" value="1"/>
</dbReference>
<dbReference type="HAMAP" id="MF_00270">
    <property type="entry name" value="Ribosomal_bS18"/>
    <property type="match status" value="1"/>
</dbReference>
<dbReference type="InterPro" id="IPR001648">
    <property type="entry name" value="Ribosomal_bS18"/>
</dbReference>
<dbReference type="InterPro" id="IPR018275">
    <property type="entry name" value="Ribosomal_bS18_CS"/>
</dbReference>
<dbReference type="InterPro" id="IPR036870">
    <property type="entry name" value="Ribosomal_bS18_sf"/>
</dbReference>
<dbReference type="NCBIfam" id="TIGR00165">
    <property type="entry name" value="S18"/>
    <property type="match status" value="1"/>
</dbReference>
<dbReference type="PANTHER" id="PTHR13479">
    <property type="entry name" value="30S RIBOSOMAL PROTEIN S18"/>
    <property type="match status" value="1"/>
</dbReference>
<dbReference type="PANTHER" id="PTHR13479:SF40">
    <property type="entry name" value="SMALL RIBOSOMAL SUBUNIT PROTEIN BS18M"/>
    <property type="match status" value="1"/>
</dbReference>
<dbReference type="Pfam" id="PF01084">
    <property type="entry name" value="Ribosomal_S18"/>
    <property type="match status" value="1"/>
</dbReference>
<dbReference type="PRINTS" id="PR00974">
    <property type="entry name" value="RIBOSOMALS18"/>
</dbReference>
<dbReference type="SUPFAM" id="SSF46911">
    <property type="entry name" value="Ribosomal protein S18"/>
    <property type="match status" value="1"/>
</dbReference>
<dbReference type="PROSITE" id="PS00057">
    <property type="entry name" value="RIBOSOMAL_S18"/>
    <property type="match status" value="1"/>
</dbReference>
<protein>
    <recommendedName>
        <fullName evidence="1">Small ribosomal subunit protein bS18</fullName>
    </recommendedName>
    <alternativeName>
        <fullName evidence="2">30S ribosomal protein S18</fullName>
    </alternativeName>
</protein>
<feature type="chain" id="PRO_0000345489" description="Small ribosomal subunit protein bS18">
    <location>
        <begin position="1"/>
        <end position="94"/>
    </location>
</feature>
<gene>
    <name evidence="1" type="primary">rpsR</name>
    <name type="ordered locus">LBF_2044</name>
</gene>
<name>RS18_LEPBA</name>